<organism>
    <name type="scientific">Shigella dysenteriae serotype 1 (strain Sd197)</name>
    <dbReference type="NCBI Taxonomy" id="300267"/>
    <lineage>
        <taxon>Bacteria</taxon>
        <taxon>Pseudomonadati</taxon>
        <taxon>Pseudomonadota</taxon>
        <taxon>Gammaproteobacteria</taxon>
        <taxon>Enterobacterales</taxon>
        <taxon>Enterobacteriaceae</taxon>
        <taxon>Shigella</taxon>
    </lineage>
</organism>
<gene>
    <name evidence="1" type="primary">glmS</name>
    <name type="ordered locus">SDY_0676</name>
</gene>
<comment type="function">
    <text evidence="1">Catalyzes the carbon skeleton rearrangement of L-glutamate to L-threo-3-methylaspartate ((2S,3S)-3-methylaspartate).</text>
</comment>
<comment type="catalytic activity">
    <reaction evidence="1">
        <text>(2S,3S)-3-methyl-L-aspartate = L-glutamate</text>
        <dbReference type="Rhea" id="RHEA:12857"/>
        <dbReference type="ChEBI" id="CHEBI:29985"/>
        <dbReference type="ChEBI" id="CHEBI:58724"/>
        <dbReference type="EC" id="5.4.99.1"/>
    </reaction>
</comment>
<comment type="cofactor">
    <cofactor evidence="1">
        <name>adenosylcob(III)alamin</name>
        <dbReference type="ChEBI" id="CHEBI:18408"/>
    </cofactor>
</comment>
<comment type="pathway">
    <text evidence="1">Amino-acid degradation; L-glutamate degradation via mesaconate pathway; acetate and pyruvate from L-glutamate: step 1/4.</text>
</comment>
<comment type="subunit">
    <text evidence="1">Heterotetramer composed of 2 epsilon subunits (GlmE) and 2 sigma subunits (GlmS). GlmE exists as a homodimer and GlmS as a monomer.</text>
</comment>
<comment type="similarity">
    <text evidence="1">Belongs to the methylaspartate mutase GlmS subunit family.</text>
</comment>
<comment type="sequence caution" evidence="2">
    <conflict type="erroneous initiation">
        <sequence resource="EMBL-CDS" id="ABB60864"/>
    </conflict>
    <text>Extended N-terminus.</text>
</comment>
<feature type="chain" id="PRO_0000264143" description="Glutamate mutase sigma subunit">
    <location>
        <begin position="1"/>
        <end position="149"/>
    </location>
</feature>
<feature type="domain" description="B12-binding" evidence="1">
    <location>
        <begin position="3"/>
        <end position="140"/>
    </location>
</feature>
<feature type="binding site" evidence="1">
    <location>
        <begin position="13"/>
        <end position="17"/>
    </location>
    <ligand>
        <name>adenosylcob(III)alamin</name>
        <dbReference type="ChEBI" id="CHEBI:18408"/>
    </ligand>
</feature>
<feature type="binding site" description="axial binding residue" evidence="1">
    <location>
        <position position="16"/>
    </location>
    <ligand>
        <name>adenosylcob(III)alamin</name>
        <dbReference type="ChEBI" id="CHEBI:18408"/>
    </ligand>
    <ligandPart>
        <name>Co</name>
        <dbReference type="ChEBI" id="CHEBI:27638"/>
    </ligandPart>
</feature>
<feature type="binding site" evidence="1">
    <location>
        <begin position="61"/>
        <end position="63"/>
    </location>
    <ligand>
        <name>adenosylcob(III)alamin</name>
        <dbReference type="ChEBI" id="CHEBI:18408"/>
    </ligand>
</feature>
<feature type="binding site" evidence="1">
    <location>
        <begin position="93"/>
        <end position="97"/>
    </location>
    <ligand>
        <name>adenosylcob(III)alamin</name>
        <dbReference type="ChEBI" id="CHEBI:18408"/>
    </ligand>
</feature>
<protein>
    <recommendedName>
        <fullName evidence="1">Glutamate mutase sigma subunit</fullName>
        <ecNumber evidence="1">5.4.99.1</ecNumber>
    </recommendedName>
    <alternativeName>
        <fullName evidence="1">Glutamate mutase S chain</fullName>
    </alternativeName>
    <alternativeName>
        <fullName evidence="1">Glutamate mutase small subunit</fullName>
    </alternativeName>
    <alternativeName>
        <fullName evidence="1">Methylaspartate mutase</fullName>
    </alternativeName>
</protein>
<reference key="1">
    <citation type="journal article" date="2005" name="Nucleic Acids Res.">
        <title>Genome dynamics and diversity of Shigella species, the etiologic agents of bacillary dysentery.</title>
        <authorList>
            <person name="Yang F."/>
            <person name="Yang J."/>
            <person name="Zhang X."/>
            <person name="Chen L."/>
            <person name="Jiang Y."/>
            <person name="Yan Y."/>
            <person name="Tang X."/>
            <person name="Wang J."/>
            <person name="Xiong Z."/>
            <person name="Dong J."/>
            <person name="Xue Y."/>
            <person name="Zhu Y."/>
            <person name="Xu X."/>
            <person name="Sun L."/>
            <person name="Chen S."/>
            <person name="Nie H."/>
            <person name="Peng J."/>
            <person name="Xu J."/>
            <person name="Wang Y."/>
            <person name="Yuan Z."/>
            <person name="Wen Y."/>
            <person name="Yao Z."/>
            <person name="Shen Y."/>
            <person name="Qiang B."/>
            <person name="Hou Y."/>
            <person name="Yu J."/>
            <person name="Jin Q."/>
        </authorList>
    </citation>
    <scope>NUCLEOTIDE SEQUENCE [LARGE SCALE GENOMIC DNA]</scope>
    <source>
        <strain>Sd197</strain>
    </source>
</reference>
<accession>Q32IJ3</accession>
<evidence type="ECO:0000255" key="1">
    <source>
        <dbReference type="HAMAP-Rule" id="MF_00526"/>
    </source>
</evidence>
<evidence type="ECO:0000305" key="2"/>
<keyword id="KW-0846">Cobalamin</keyword>
<keyword id="KW-0170">Cobalt</keyword>
<keyword id="KW-0413">Isomerase</keyword>
<keyword id="KW-0479">Metal-binding</keyword>
<keyword id="KW-1185">Reference proteome</keyword>
<dbReference type="EC" id="5.4.99.1" evidence="1"/>
<dbReference type="EMBL" id="CP000034">
    <property type="protein sequence ID" value="ABB60864.1"/>
    <property type="status" value="ALT_INIT"/>
    <property type="molecule type" value="Genomic_DNA"/>
</dbReference>
<dbReference type="RefSeq" id="WP_000710390.1">
    <property type="nucleotide sequence ID" value="NC_007606.1"/>
</dbReference>
<dbReference type="RefSeq" id="YP_402353.1">
    <property type="nucleotide sequence ID" value="NC_007606.1"/>
</dbReference>
<dbReference type="SMR" id="Q32IJ3"/>
<dbReference type="STRING" id="300267.SDY_0676"/>
<dbReference type="EnsemblBacteria" id="ABB60864">
    <property type="protein sequence ID" value="ABB60864"/>
    <property type="gene ID" value="SDY_0676"/>
</dbReference>
<dbReference type="GeneID" id="75170728"/>
<dbReference type="KEGG" id="sdy:SDY_0676"/>
<dbReference type="PATRIC" id="fig|300267.13.peg.789"/>
<dbReference type="HOGENOM" id="CLU_136705_0_0_6"/>
<dbReference type="UniPathway" id="UPA00561">
    <property type="reaction ID" value="UER00617"/>
</dbReference>
<dbReference type="Proteomes" id="UP000002716">
    <property type="component" value="Chromosome"/>
</dbReference>
<dbReference type="GO" id="GO:0031419">
    <property type="term" value="F:cobalamin binding"/>
    <property type="evidence" value="ECO:0007669"/>
    <property type="project" value="UniProtKB-KW"/>
</dbReference>
<dbReference type="GO" id="GO:0046872">
    <property type="term" value="F:metal ion binding"/>
    <property type="evidence" value="ECO:0007669"/>
    <property type="project" value="UniProtKB-KW"/>
</dbReference>
<dbReference type="GO" id="GO:0050097">
    <property type="term" value="F:methylaspartate mutase activity"/>
    <property type="evidence" value="ECO:0007669"/>
    <property type="project" value="UniProtKB-UniRule"/>
</dbReference>
<dbReference type="GO" id="GO:0019670">
    <property type="term" value="P:anaerobic glutamate catabolic process"/>
    <property type="evidence" value="ECO:0007669"/>
    <property type="project" value="InterPro"/>
</dbReference>
<dbReference type="GO" id="GO:0019553">
    <property type="term" value="P:glutamate catabolic process via L-citramalate"/>
    <property type="evidence" value="ECO:0007669"/>
    <property type="project" value="UniProtKB-UniRule"/>
</dbReference>
<dbReference type="CDD" id="cd02072">
    <property type="entry name" value="Glm_B12_BD"/>
    <property type="match status" value="1"/>
</dbReference>
<dbReference type="Gene3D" id="3.40.50.280">
    <property type="entry name" value="Cobalamin-binding domain"/>
    <property type="match status" value="1"/>
</dbReference>
<dbReference type="HAMAP" id="MF_00526">
    <property type="entry name" value="Me_Asp_mutase_S"/>
    <property type="match status" value="1"/>
</dbReference>
<dbReference type="InterPro" id="IPR006158">
    <property type="entry name" value="Cobalamin-bd"/>
</dbReference>
<dbReference type="InterPro" id="IPR036724">
    <property type="entry name" value="Cobalamin-bd_sf"/>
</dbReference>
<dbReference type="InterPro" id="IPR006394">
    <property type="entry name" value="GlmS"/>
</dbReference>
<dbReference type="NCBIfam" id="TIGR01501">
    <property type="entry name" value="MthylAspMutase"/>
    <property type="match status" value="1"/>
</dbReference>
<dbReference type="NCBIfam" id="NF002612">
    <property type="entry name" value="PRK02261.1"/>
    <property type="match status" value="1"/>
</dbReference>
<dbReference type="Pfam" id="PF02310">
    <property type="entry name" value="B12-binding"/>
    <property type="match status" value="1"/>
</dbReference>
<dbReference type="SUPFAM" id="SSF52242">
    <property type="entry name" value="Cobalamin (vitamin B12)-binding domain"/>
    <property type="match status" value="1"/>
</dbReference>
<dbReference type="PROSITE" id="PS51332">
    <property type="entry name" value="B12_BINDING"/>
    <property type="match status" value="1"/>
</dbReference>
<sequence>MKKATLVIGVIGADCHAVGNKVLDRVFSNHDFRVINLGVMVSQDEYIDAAIETGADAIVVSSIYGHGDIDCLGMRERCIERGLGDILLYVGGNLVVGKHDFADVETKFKEMGFDRVFAPSHDLEDVCQLMAHDINQRHDVDTRILEEAI</sequence>
<proteinExistence type="inferred from homology"/>
<name>GMSS_SHIDS</name>